<accession>B5E4M9</accession>
<keyword id="KW-0227">DNA damage</keyword>
<keyword id="KW-0234">DNA repair</keyword>
<keyword id="KW-0235">DNA replication</keyword>
<keyword id="KW-0436">Ligase</keyword>
<keyword id="KW-0460">Magnesium</keyword>
<keyword id="KW-0464">Manganese</keyword>
<keyword id="KW-0479">Metal-binding</keyword>
<keyword id="KW-0520">NAD</keyword>
<keyword id="KW-0862">Zinc</keyword>
<dbReference type="EC" id="6.5.1.2" evidence="1"/>
<dbReference type="EMBL" id="CP001015">
    <property type="protein sequence ID" value="ACF56191.1"/>
    <property type="molecule type" value="Genomic_DNA"/>
</dbReference>
<dbReference type="SMR" id="B5E4M9"/>
<dbReference type="KEGG" id="spx:SPG_1035"/>
<dbReference type="HOGENOM" id="CLU_007764_2_1_9"/>
<dbReference type="GO" id="GO:0005829">
    <property type="term" value="C:cytosol"/>
    <property type="evidence" value="ECO:0007669"/>
    <property type="project" value="TreeGrafter"/>
</dbReference>
<dbReference type="GO" id="GO:0003677">
    <property type="term" value="F:DNA binding"/>
    <property type="evidence" value="ECO:0007669"/>
    <property type="project" value="InterPro"/>
</dbReference>
<dbReference type="GO" id="GO:0003911">
    <property type="term" value="F:DNA ligase (NAD+) activity"/>
    <property type="evidence" value="ECO:0007669"/>
    <property type="project" value="UniProtKB-UniRule"/>
</dbReference>
<dbReference type="GO" id="GO:0046872">
    <property type="term" value="F:metal ion binding"/>
    <property type="evidence" value="ECO:0007669"/>
    <property type="project" value="UniProtKB-KW"/>
</dbReference>
<dbReference type="GO" id="GO:0006281">
    <property type="term" value="P:DNA repair"/>
    <property type="evidence" value="ECO:0007669"/>
    <property type="project" value="UniProtKB-KW"/>
</dbReference>
<dbReference type="GO" id="GO:0006260">
    <property type="term" value="P:DNA replication"/>
    <property type="evidence" value="ECO:0007669"/>
    <property type="project" value="UniProtKB-KW"/>
</dbReference>
<dbReference type="CDD" id="cd17748">
    <property type="entry name" value="BRCT_DNA_ligase_like"/>
    <property type="match status" value="1"/>
</dbReference>
<dbReference type="CDD" id="cd00114">
    <property type="entry name" value="LIGANc"/>
    <property type="match status" value="1"/>
</dbReference>
<dbReference type="FunFam" id="1.10.150.20:FF:000006">
    <property type="entry name" value="DNA ligase"/>
    <property type="match status" value="1"/>
</dbReference>
<dbReference type="FunFam" id="1.10.150.20:FF:000007">
    <property type="entry name" value="DNA ligase"/>
    <property type="match status" value="1"/>
</dbReference>
<dbReference type="FunFam" id="1.10.287.610:FF:000002">
    <property type="entry name" value="DNA ligase"/>
    <property type="match status" value="1"/>
</dbReference>
<dbReference type="FunFam" id="2.40.50.140:FF:000012">
    <property type="entry name" value="DNA ligase"/>
    <property type="match status" value="1"/>
</dbReference>
<dbReference type="FunFam" id="3.30.470.30:FF:000001">
    <property type="entry name" value="DNA ligase"/>
    <property type="match status" value="1"/>
</dbReference>
<dbReference type="FunFam" id="3.40.50.10190:FF:000045">
    <property type="entry name" value="DNA ligase"/>
    <property type="match status" value="1"/>
</dbReference>
<dbReference type="Gene3D" id="6.20.10.30">
    <property type="match status" value="1"/>
</dbReference>
<dbReference type="Gene3D" id="1.10.150.20">
    <property type="entry name" value="5' to 3' exonuclease, C-terminal subdomain"/>
    <property type="match status" value="2"/>
</dbReference>
<dbReference type="Gene3D" id="3.40.50.10190">
    <property type="entry name" value="BRCT domain"/>
    <property type="match status" value="1"/>
</dbReference>
<dbReference type="Gene3D" id="3.30.470.30">
    <property type="entry name" value="DNA ligase/mRNA capping enzyme"/>
    <property type="match status" value="1"/>
</dbReference>
<dbReference type="Gene3D" id="1.10.287.610">
    <property type="entry name" value="Helix hairpin bin"/>
    <property type="match status" value="1"/>
</dbReference>
<dbReference type="Gene3D" id="2.40.50.140">
    <property type="entry name" value="Nucleic acid-binding proteins"/>
    <property type="match status" value="1"/>
</dbReference>
<dbReference type="HAMAP" id="MF_01588">
    <property type="entry name" value="DNA_ligase_A"/>
    <property type="match status" value="1"/>
</dbReference>
<dbReference type="InterPro" id="IPR001357">
    <property type="entry name" value="BRCT_dom"/>
</dbReference>
<dbReference type="InterPro" id="IPR036420">
    <property type="entry name" value="BRCT_dom_sf"/>
</dbReference>
<dbReference type="InterPro" id="IPR041663">
    <property type="entry name" value="DisA/LigA_HHH"/>
</dbReference>
<dbReference type="InterPro" id="IPR001679">
    <property type="entry name" value="DNA_ligase"/>
</dbReference>
<dbReference type="InterPro" id="IPR018239">
    <property type="entry name" value="DNA_ligase_AS"/>
</dbReference>
<dbReference type="InterPro" id="IPR033136">
    <property type="entry name" value="DNA_ligase_CS"/>
</dbReference>
<dbReference type="InterPro" id="IPR013839">
    <property type="entry name" value="DNAligase_adenylation"/>
</dbReference>
<dbReference type="InterPro" id="IPR013840">
    <property type="entry name" value="DNAligase_N"/>
</dbReference>
<dbReference type="InterPro" id="IPR003583">
    <property type="entry name" value="Hlx-hairpin-Hlx_DNA-bd_motif"/>
</dbReference>
<dbReference type="InterPro" id="IPR012340">
    <property type="entry name" value="NA-bd_OB-fold"/>
</dbReference>
<dbReference type="InterPro" id="IPR004150">
    <property type="entry name" value="NAD_DNA_ligase_OB"/>
</dbReference>
<dbReference type="InterPro" id="IPR010994">
    <property type="entry name" value="RuvA_2-like"/>
</dbReference>
<dbReference type="InterPro" id="IPR004149">
    <property type="entry name" value="Znf_DNAligase_C4"/>
</dbReference>
<dbReference type="NCBIfam" id="TIGR00575">
    <property type="entry name" value="dnlj"/>
    <property type="match status" value="1"/>
</dbReference>
<dbReference type="NCBIfam" id="NF005932">
    <property type="entry name" value="PRK07956.1"/>
    <property type="match status" value="1"/>
</dbReference>
<dbReference type="PANTHER" id="PTHR23389">
    <property type="entry name" value="CHROMOSOME TRANSMISSION FIDELITY FACTOR 18"/>
    <property type="match status" value="1"/>
</dbReference>
<dbReference type="PANTHER" id="PTHR23389:SF9">
    <property type="entry name" value="DNA LIGASE"/>
    <property type="match status" value="1"/>
</dbReference>
<dbReference type="Pfam" id="PF00533">
    <property type="entry name" value="BRCT"/>
    <property type="match status" value="1"/>
</dbReference>
<dbReference type="Pfam" id="PF01653">
    <property type="entry name" value="DNA_ligase_aden"/>
    <property type="match status" value="1"/>
</dbReference>
<dbReference type="Pfam" id="PF03120">
    <property type="entry name" value="DNA_ligase_OB"/>
    <property type="match status" value="1"/>
</dbReference>
<dbReference type="Pfam" id="PF03119">
    <property type="entry name" value="DNA_ligase_ZBD"/>
    <property type="match status" value="1"/>
</dbReference>
<dbReference type="Pfam" id="PF12826">
    <property type="entry name" value="HHH_2"/>
    <property type="match status" value="1"/>
</dbReference>
<dbReference type="Pfam" id="PF14520">
    <property type="entry name" value="HHH_5"/>
    <property type="match status" value="1"/>
</dbReference>
<dbReference type="PIRSF" id="PIRSF001604">
    <property type="entry name" value="LigA"/>
    <property type="match status" value="1"/>
</dbReference>
<dbReference type="SMART" id="SM00292">
    <property type="entry name" value="BRCT"/>
    <property type="match status" value="1"/>
</dbReference>
<dbReference type="SMART" id="SM00278">
    <property type="entry name" value="HhH1"/>
    <property type="match status" value="2"/>
</dbReference>
<dbReference type="SMART" id="SM00532">
    <property type="entry name" value="LIGANc"/>
    <property type="match status" value="1"/>
</dbReference>
<dbReference type="SUPFAM" id="SSF52113">
    <property type="entry name" value="BRCT domain"/>
    <property type="match status" value="1"/>
</dbReference>
<dbReference type="SUPFAM" id="SSF56091">
    <property type="entry name" value="DNA ligase/mRNA capping enzyme, catalytic domain"/>
    <property type="match status" value="1"/>
</dbReference>
<dbReference type="SUPFAM" id="SSF50249">
    <property type="entry name" value="Nucleic acid-binding proteins"/>
    <property type="match status" value="1"/>
</dbReference>
<dbReference type="SUPFAM" id="SSF47781">
    <property type="entry name" value="RuvA domain 2-like"/>
    <property type="match status" value="1"/>
</dbReference>
<dbReference type="PROSITE" id="PS50172">
    <property type="entry name" value="BRCT"/>
    <property type="match status" value="1"/>
</dbReference>
<dbReference type="PROSITE" id="PS01055">
    <property type="entry name" value="DNA_LIGASE_N1"/>
    <property type="match status" value="1"/>
</dbReference>
<dbReference type="PROSITE" id="PS01056">
    <property type="entry name" value="DNA_LIGASE_N2"/>
    <property type="match status" value="1"/>
</dbReference>
<reference key="1">
    <citation type="journal article" date="2001" name="Microb. Drug Resist.">
        <title>Annotated draft genomic sequence from a Streptococcus pneumoniae type 19F clinical isolate.</title>
        <authorList>
            <person name="Dopazo J."/>
            <person name="Mendoza A."/>
            <person name="Herrero J."/>
            <person name="Caldara F."/>
            <person name="Humbert Y."/>
            <person name="Friedli L."/>
            <person name="Guerrier M."/>
            <person name="Grand-Schenk E."/>
            <person name="Gandin C."/>
            <person name="de Francesco M."/>
            <person name="Polissi A."/>
            <person name="Buell G."/>
            <person name="Feger G."/>
            <person name="Garcia E."/>
            <person name="Peitsch M."/>
            <person name="Garcia-Bustos J.F."/>
        </authorList>
    </citation>
    <scope>NUCLEOTIDE SEQUENCE [LARGE SCALE GENOMIC DNA]</scope>
    <source>
        <strain>G54</strain>
    </source>
</reference>
<reference key="2">
    <citation type="submission" date="2008-03" db="EMBL/GenBank/DDBJ databases">
        <title>Pneumococcal beta glucoside metabolism investigated by whole genome comparison.</title>
        <authorList>
            <person name="Mulas L."/>
            <person name="Trappetti C."/>
            <person name="Hakenbeck R."/>
            <person name="Iannelli F."/>
            <person name="Pozzi G."/>
            <person name="Davidsen T.M."/>
            <person name="Tettelin H."/>
            <person name="Oggioni M."/>
        </authorList>
    </citation>
    <scope>NUCLEOTIDE SEQUENCE [LARGE SCALE GENOMIC DNA]</scope>
    <source>
        <strain>G54</strain>
    </source>
</reference>
<gene>
    <name evidence="1" type="primary">ligA</name>
    <name type="ordered locus">SPG_1035</name>
</gene>
<protein>
    <recommendedName>
        <fullName evidence="1">DNA ligase</fullName>
        <ecNumber evidence="1">6.5.1.2</ecNumber>
    </recommendedName>
    <alternativeName>
        <fullName evidence="1">Polydeoxyribonucleotide synthase [NAD(+)]</fullName>
    </alternativeName>
</protein>
<feature type="chain" id="PRO_0000380479" description="DNA ligase">
    <location>
        <begin position="1"/>
        <end position="652"/>
    </location>
</feature>
<feature type="domain" description="BRCT" evidence="1">
    <location>
        <begin position="577"/>
        <end position="652"/>
    </location>
</feature>
<feature type="active site" description="N6-AMP-lysine intermediate" evidence="1">
    <location>
        <position position="109"/>
    </location>
</feature>
<feature type="binding site" evidence="1">
    <location>
        <begin position="29"/>
        <end position="33"/>
    </location>
    <ligand>
        <name>NAD(+)</name>
        <dbReference type="ChEBI" id="CHEBI:57540"/>
    </ligand>
</feature>
<feature type="binding site" evidence="1">
    <location>
        <begin position="78"/>
        <end position="79"/>
    </location>
    <ligand>
        <name>NAD(+)</name>
        <dbReference type="ChEBI" id="CHEBI:57540"/>
    </ligand>
</feature>
<feature type="binding site" evidence="1">
    <location>
        <position position="107"/>
    </location>
    <ligand>
        <name>NAD(+)</name>
        <dbReference type="ChEBI" id="CHEBI:57540"/>
    </ligand>
</feature>
<feature type="binding site" evidence="1">
    <location>
        <position position="130"/>
    </location>
    <ligand>
        <name>NAD(+)</name>
        <dbReference type="ChEBI" id="CHEBI:57540"/>
    </ligand>
</feature>
<feature type="binding site" evidence="1">
    <location>
        <position position="164"/>
    </location>
    <ligand>
        <name>NAD(+)</name>
        <dbReference type="ChEBI" id="CHEBI:57540"/>
    </ligand>
</feature>
<feature type="binding site" evidence="1">
    <location>
        <position position="278"/>
    </location>
    <ligand>
        <name>NAD(+)</name>
        <dbReference type="ChEBI" id="CHEBI:57540"/>
    </ligand>
</feature>
<feature type="binding site" evidence="1">
    <location>
        <position position="302"/>
    </location>
    <ligand>
        <name>NAD(+)</name>
        <dbReference type="ChEBI" id="CHEBI:57540"/>
    </ligand>
</feature>
<feature type="binding site" evidence="1">
    <location>
        <position position="395"/>
    </location>
    <ligand>
        <name>Zn(2+)</name>
        <dbReference type="ChEBI" id="CHEBI:29105"/>
    </ligand>
</feature>
<feature type="binding site" evidence="1">
    <location>
        <position position="398"/>
    </location>
    <ligand>
        <name>Zn(2+)</name>
        <dbReference type="ChEBI" id="CHEBI:29105"/>
    </ligand>
</feature>
<feature type="binding site" evidence="1">
    <location>
        <position position="413"/>
    </location>
    <ligand>
        <name>Zn(2+)</name>
        <dbReference type="ChEBI" id="CHEBI:29105"/>
    </ligand>
</feature>
<feature type="binding site" evidence="1">
    <location>
        <position position="418"/>
    </location>
    <ligand>
        <name>Zn(2+)</name>
        <dbReference type="ChEBI" id="CHEBI:29105"/>
    </ligand>
</feature>
<evidence type="ECO:0000255" key="1">
    <source>
        <dbReference type="HAMAP-Rule" id="MF_01588"/>
    </source>
</evidence>
<name>DNLJ_STRP4</name>
<organism>
    <name type="scientific">Streptococcus pneumoniae serotype 19F (strain G54)</name>
    <dbReference type="NCBI Taxonomy" id="512566"/>
    <lineage>
        <taxon>Bacteria</taxon>
        <taxon>Bacillati</taxon>
        <taxon>Bacillota</taxon>
        <taxon>Bacilli</taxon>
        <taxon>Lactobacillales</taxon>
        <taxon>Streptococcaceae</taxon>
        <taxon>Streptococcus</taxon>
    </lineage>
</organism>
<comment type="function">
    <text evidence="1">DNA ligase that catalyzes the formation of phosphodiester linkages between 5'-phosphoryl and 3'-hydroxyl groups in double-stranded DNA using NAD as a coenzyme and as the energy source for the reaction. It is essential for DNA replication and repair of damaged DNA.</text>
</comment>
<comment type="catalytic activity">
    <reaction evidence="1">
        <text>NAD(+) + (deoxyribonucleotide)n-3'-hydroxyl + 5'-phospho-(deoxyribonucleotide)m = (deoxyribonucleotide)n+m + AMP + beta-nicotinamide D-nucleotide.</text>
        <dbReference type="EC" id="6.5.1.2"/>
    </reaction>
</comment>
<comment type="cofactor">
    <cofactor evidence="1">
        <name>Mg(2+)</name>
        <dbReference type="ChEBI" id="CHEBI:18420"/>
    </cofactor>
    <cofactor evidence="1">
        <name>Mn(2+)</name>
        <dbReference type="ChEBI" id="CHEBI:29035"/>
    </cofactor>
</comment>
<comment type="similarity">
    <text evidence="1">Belongs to the NAD-dependent DNA ligase family. LigA subfamily.</text>
</comment>
<sequence length="652" mass="72304">MNKRMNELVALLNRYATEYYTSDNPSVSDSEYDRLYRELVELETAYPEQVLADSPTHRVGGKVLDGFEKYSHQYPLYSLQDAFSREELDAFDARVRKEVAHPTYICELKIDGLSISLTYEKGILVAGVTRGDGSIGENITENLKRVKDIPLTLPEELDITVRGECYMPRASFDQVNQVRQENGEPEFANPRNAAAGTLRQLDTAVVAKRNLATFLYQEASPSTRDSQEKGLKYLEQLGFVVNPKRILAENIDEIWNFIQEVGQERENLPYDIDGVVIKVNDLASQEELGFTVKAPKWAVAYKFPAEEKEAQLLSVDWTVGRTGVVTPTANLTPVQLAGTTVSRATLHNVDYIAEKDIRKDDTVIVYKAGDIIPAVLRVVESKRVSEEKLDIPTNCPSCNSDLLHFEDEVALRCINPRCPAQIMEGLIHFASRDAMNITGLGPSIVEKLFAANLVKDVADIYRLQEEDFLLLEGVKEKSAAKLYQAIQASKENSAEKLLFGLGIRHVGSKASQLLLQYFHSIENLYQADSEEVASIESLGGVIAKSLQTYFATEGSEILLRELKETGVNLDYKGQTVVADAALSGLTVVLTGKLERLKRSEAKSKLESLGAKVTGSVSKKTDLVVVGADAGSKLQKAQELGIQVRDEAWLESL</sequence>
<proteinExistence type="inferred from homology"/>